<keyword id="KW-0997">Cell inner membrane</keyword>
<keyword id="KW-1003">Cell membrane</keyword>
<keyword id="KW-0169">Cobalamin biosynthesis</keyword>
<keyword id="KW-0460">Magnesium</keyword>
<keyword id="KW-0472">Membrane</keyword>
<keyword id="KW-0808">Transferase</keyword>
<keyword id="KW-0812">Transmembrane</keyword>
<keyword id="KW-1133">Transmembrane helix</keyword>
<protein>
    <recommendedName>
        <fullName evidence="1">Adenosylcobinamide-GDP ribazoletransferase</fullName>
        <ecNumber evidence="1">2.7.8.26</ecNumber>
    </recommendedName>
    <alternativeName>
        <fullName evidence="1">Cobalamin synthase</fullName>
    </alternativeName>
    <alternativeName>
        <fullName evidence="1">Cobalamin-5'-phosphate synthase</fullName>
    </alternativeName>
</protein>
<dbReference type="EC" id="2.7.8.26" evidence="1"/>
<dbReference type="EMBL" id="CU928164">
    <property type="protein sequence ID" value="CAR17191.1"/>
    <property type="molecule type" value="Genomic_DNA"/>
</dbReference>
<dbReference type="RefSeq" id="WP_001296197.1">
    <property type="nucleotide sequence ID" value="NC_011750.1"/>
</dbReference>
<dbReference type="RefSeq" id="YP_002407071.1">
    <property type="nucleotide sequence ID" value="NC_011750.1"/>
</dbReference>
<dbReference type="STRING" id="585057.ECIAI39_1055"/>
<dbReference type="KEGG" id="ect:ECIAI39_1055"/>
<dbReference type="PATRIC" id="fig|585057.6.peg.1105"/>
<dbReference type="HOGENOM" id="CLU_057426_1_1_6"/>
<dbReference type="UniPathway" id="UPA00148">
    <property type="reaction ID" value="UER00238"/>
</dbReference>
<dbReference type="Proteomes" id="UP000000749">
    <property type="component" value="Chromosome"/>
</dbReference>
<dbReference type="GO" id="GO:0005886">
    <property type="term" value="C:plasma membrane"/>
    <property type="evidence" value="ECO:0007669"/>
    <property type="project" value="UniProtKB-SubCell"/>
</dbReference>
<dbReference type="GO" id="GO:0051073">
    <property type="term" value="F:adenosylcobinamide-GDP ribazoletransferase activity"/>
    <property type="evidence" value="ECO:0007669"/>
    <property type="project" value="UniProtKB-UniRule"/>
</dbReference>
<dbReference type="GO" id="GO:0008818">
    <property type="term" value="F:cobalamin 5'-phosphate synthase activity"/>
    <property type="evidence" value="ECO:0007669"/>
    <property type="project" value="UniProtKB-UniRule"/>
</dbReference>
<dbReference type="GO" id="GO:0009236">
    <property type="term" value="P:cobalamin biosynthetic process"/>
    <property type="evidence" value="ECO:0007669"/>
    <property type="project" value="UniProtKB-UniRule"/>
</dbReference>
<dbReference type="HAMAP" id="MF_00719">
    <property type="entry name" value="CobS"/>
    <property type="match status" value="1"/>
</dbReference>
<dbReference type="InterPro" id="IPR003805">
    <property type="entry name" value="CobS"/>
</dbReference>
<dbReference type="NCBIfam" id="TIGR00317">
    <property type="entry name" value="cobS"/>
    <property type="match status" value="1"/>
</dbReference>
<dbReference type="PANTHER" id="PTHR34148">
    <property type="entry name" value="ADENOSYLCOBINAMIDE-GDP RIBAZOLETRANSFERASE"/>
    <property type="match status" value="1"/>
</dbReference>
<dbReference type="PANTHER" id="PTHR34148:SF1">
    <property type="entry name" value="ADENOSYLCOBINAMIDE-GDP RIBAZOLETRANSFERASE"/>
    <property type="match status" value="1"/>
</dbReference>
<dbReference type="Pfam" id="PF02654">
    <property type="entry name" value="CobS"/>
    <property type="match status" value="1"/>
</dbReference>
<reference key="1">
    <citation type="journal article" date="2009" name="PLoS Genet.">
        <title>Organised genome dynamics in the Escherichia coli species results in highly diverse adaptive paths.</title>
        <authorList>
            <person name="Touchon M."/>
            <person name="Hoede C."/>
            <person name="Tenaillon O."/>
            <person name="Barbe V."/>
            <person name="Baeriswyl S."/>
            <person name="Bidet P."/>
            <person name="Bingen E."/>
            <person name="Bonacorsi S."/>
            <person name="Bouchier C."/>
            <person name="Bouvet O."/>
            <person name="Calteau A."/>
            <person name="Chiapello H."/>
            <person name="Clermont O."/>
            <person name="Cruveiller S."/>
            <person name="Danchin A."/>
            <person name="Diard M."/>
            <person name="Dossat C."/>
            <person name="Karoui M.E."/>
            <person name="Frapy E."/>
            <person name="Garry L."/>
            <person name="Ghigo J.M."/>
            <person name="Gilles A.M."/>
            <person name="Johnson J."/>
            <person name="Le Bouguenec C."/>
            <person name="Lescat M."/>
            <person name="Mangenot S."/>
            <person name="Martinez-Jehanne V."/>
            <person name="Matic I."/>
            <person name="Nassif X."/>
            <person name="Oztas S."/>
            <person name="Petit M.A."/>
            <person name="Pichon C."/>
            <person name="Rouy Z."/>
            <person name="Ruf C.S."/>
            <person name="Schneider D."/>
            <person name="Tourret J."/>
            <person name="Vacherie B."/>
            <person name="Vallenet D."/>
            <person name="Medigue C."/>
            <person name="Rocha E.P.C."/>
            <person name="Denamur E."/>
        </authorList>
    </citation>
    <scope>NUCLEOTIDE SEQUENCE [LARGE SCALE GENOMIC DNA]</scope>
    <source>
        <strain>IAI39 / ExPEC</strain>
    </source>
</reference>
<organism>
    <name type="scientific">Escherichia coli O7:K1 (strain IAI39 / ExPEC)</name>
    <dbReference type="NCBI Taxonomy" id="585057"/>
    <lineage>
        <taxon>Bacteria</taxon>
        <taxon>Pseudomonadati</taxon>
        <taxon>Pseudomonadota</taxon>
        <taxon>Gammaproteobacteria</taxon>
        <taxon>Enterobacterales</taxon>
        <taxon>Enterobacteriaceae</taxon>
        <taxon>Escherichia</taxon>
    </lineage>
</organism>
<comment type="function">
    <text evidence="1">Joins adenosylcobinamide-GDP and alpha-ribazole to generate adenosylcobalamin (Ado-cobalamin). Also synthesizes adenosylcobalamin 5'-phosphate from adenosylcobinamide-GDP and alpha-ribazole 5'-phosphate.</text>
</comment>
<comment type="catalytic activity">
    <reaction evidence="1">
        <text>alpha-ribazole + adenosylcob(III)inamide-GDP = adenosylcob(III)alamin + GMP + H(+)</text>
        <dbReference type="Rhea" id="RHEA:16049"/>
        <dbReference type="ChEBI" id="CHEBI:10329"/>
        <dbReference type="ChEBI" id="CHEBI:15378"/>
        <dbReference type="ChEBI" id="CHEBI:18408"/>
        <dbReference type="ChEBI" id="CHEBI:58115"/>
        <dbReference type="ChEBI" id="CHEBI:60487"/>
        <dbReference type="EC" id="2.7.8.26"/>
    </reaction>
</comment>
<comment type="catalytic activity">
    <reaction evidence="1">
        <text>alpha-ribazole 5'-phosphate + adenosylcob(III)inamide-GDP = adenosylcob(III)alamin 5'-phosphate + GMP + H(+)</text>
        <dbReference type="Rhea" id="RHEA:23560"/>
        <dbReference type="ChEBI" id="CHEBI:15378"/>
        <dbReference type="ChEBI" id="CHEBI:57918"/>
        <dbReference type="ChEBI" id="CHEBI:58115"/>
        <dbReference type="ChEBI" id="CHEBI:60487"/>
        <dbReference type="ChEBI" id="CHEBI:60493"/>
        <dbReference type="EC" id="2.7.8.26"/>
    </reaction>
</comment>
<comment type="cofactor">
    <cofactor evidence="1">
        <name>Mg(2+)</name>
        <dbReference type="ChEBI" id="CHEBI:18420"/>
    </cofactor>
</comment>
<comment type="pathway">
    <text evidence="1">Cofactor biosynthesis; adenosylcobalamin biosynthesis; adenosylcobalamin from cob(II)yrinate a,c-diamide: step 7/7.</text>
</comment>
<comment type="subcellular location">
    <subcellularLocation>
        <location evidence="1">Cell inner membrane</location>
        <topology evidence="1">Multi-pass membrane protein</topology>
    </subcellularLocation>
</comment>
<comment type="similarity">
    <text evidence="1">Belongs to the CobS family.</text>
</comment>
<evidence type="ECO:0000255" key="1">
    <source>
        <dbReference type="HAMAP-Rule" id="MF_00719"/>
    </source>
</evidence>
<accession>B7NR82</accession>
<sequence length="247" mass="26430">MSKLFWAMLSFITRLPVPRRWSQGLDFEHYSRGIITFPLIGLLLGAISGLVFMVLQAWCGVPLAALFSVLVLALMTGGFHLDGLADTCDGVFSARSRDRMLEIMRDSRLGTHGGLALIFVVLAKILVLSELALRGEPILASLAAACAVSRGTAALLMYRHRYAREEGLGNVFIGKIDGRQTCVTLGLAAIFAAVLLPGMHGVAAMVVTMVAIFILGQLLKRTLGGQTGDTLGAAIEFGELVFLLALL</sequence>
<name>COBS_ECO7I</name>
<feature type="chain" id="PRO_1000132576" description="Adenosylcobinamide-GDP ribazoletransferase">
    <location>
        <begin position="1"/>
        <end position="247"/>
    </location>
</feature>
<feature type="transmembrane region" description="Helical" evidence="1">
    <location>
        <begin position="34"/>
        <end position="54"/>
    </location>
</feature>
<feature type="transmembrane region" description="Helical" evidence="1">
    <location>
        <begin position="59"/>
        <end position="79"/>
    </location>
</feature>
<feature type="transmembrane region" description="Helical" evidence="1">
    <location>
        <begin position="113"/>
        <end position="133"/>
    </location>
</feature>
<feature type="transmembrane region" description="Helical" evidence="1">
    <location>
        <begin position="138"/>
        <end position="158"/>
    </location>
</feature>
<feature type="transmembrane region" description="Helical" evidence="1">
    <location>
        <begin position="194"/>
        <end position="214"/>
    </location>
</feature>
<gene>
    <name evidence="1" type="primary">cobS</name>
    <name type="ordered locus">ECIAI39_1055</name>
</gene>
<proteinExistence type="inferred from homology"/>